<name>GLK_XYLFA</name>
<reference key="1">
    <citation type="journal article" date="2000" name="Nature">
        <title>The genome sequence of the plant pathogen Xylella fastidiosa.</title>
        <authorList>
            <person name="Simpson A.J.G."/>
            <person name="Reinach F.C."/>
            <person name="Arruda P."/>
            <person name="Abreu F.A."/>
            <person name="Acencio M."/>
            <person name="Alvarenga R."/>
            <person name="Alves L.M.C."/>
            <person name="Araya J.E."/>
            <person name="Baia G.S."/>
            <person name="Baptista C.S."/>
            <person name="Barros M.H."/>
            <person name="Bonaccorsi E.D."/>
            <person name="Bordin S."/>
            <person name="Bove J.M."/>
            <person name="Briones M.R.S."/>
            <person name="Bueno M.R.P."/>
            <person name="Camargo A.A."/>
            <person name="Camargo L.E.A."/>
            <person name="Carraro D.M."/>
            <person name="Carrer H."/>
            <person name="Colauto N.B."/>
            <person name="Colombo C."/>
            <person name="Costa F.F."/>
            <person name="Costa M.C.R."/>
            <person name="Costa-Neto C.M."/>
            <person name="Coutinho L.L."/>
            <person name="Cristofani M."/>
            <person name="Dias-Neto E."/>
            <person name="Docena C."/>
            <person name="El-Dorry H."/>
            <person name="Facincani A.P."/>
            <person name="Ferreira A.J.S."/>
            <person name="Ferreira V.C.A."/>
            <person name="Ferro J.A."/>
            <person name="Fraga J.S."/>
            <person name="Franca S.C."/>
            <person name="Franco M.C."/>
            <person name="Frohme M."/>
            <person name="Furlan L.R."/>
            <person name="Garnier M."/>
            <person name="Goldman G.H."/>
            <person name="Goldman M.H.S."/>
            <person name="Gomes S.L."/>
            <person name="Gruber A."/>
            <person name="Ho P.L."/>
            <person name="Hoheisel J.D."/>
            <person name="Junqueira M.L."/>
            <person name="Kemper E.L."/>
            <person name="Kitajima J.P."/>
            <person name="Krieger J.E."/>
            <person name="Kuramae E.E."/>
            <person name="Laigret F."/>
            <person name="Lambais M.R."/>
            <person name="Leite L.C.C."/>
            <person name="Lemos E.G.M."/>
            <person name="Lemos M.V.F."/>
            <person name="Lopes S.A."/>
            <person name="Lopes C.R."/>
            <person name="Machado J.A."/>
            <person name="Machado M.A."/>
            <person name="Madeira A.M.B.N."/>
            <person name="Madeira H.M.F."/>
            <person name="Marino C.L."/>
            <person name="Marques M.V."/>
            <person name="Martins E.A.L."/>
            <person name="Martins E.M.F."/>
            <person name="Matsukuma A.Y."/>
            <person name="Menck C.F.M."/>
            <person name="Miracca E.C."/>
            <person name="Miyaki C.Y."/>
            <person name="Monteiro-Vitorello C.B."/>
            <person name="Moon D.H."/>
            <person name="Nagai M.A."/>
            <person name="Nascimento A.L.T.O."/>
            <person name="Netto L.E.S."/>
            <person name="Nhani A. Jr."/>
            <person name="Nobrega F.G."/>
            <person name="Nunes L.R."/>
            <person name="Oliveira M.A."/>
            <person name="de Oliveira M.C."/>
            <person name="de Oliveira R.C."/>
            <person name="Palmieri D.A."/>
            <person name="Paris A."/>
            <person name="Peixoto B.R."/>
            <person name="Pereira G.A.G."/>
            <person name="Pereira H.A. Jr."/>
            <person name="Pesquero J.B."/>
            <person name="Quaggio R.B."/>
            <person name="Roberto P.G."/>
            <person name="Rodrigues V."/>
            <person name="de Rosa A.J.M."/>
            <person name="de Rosa V.E. Jr."/>
            <person name="de Sa R.G."/>
            <person name="Santelli R.V."/>
            <person name="Sawasaki H.E."/>
            <person name="da Silva A.C.R."/>
            <person name="da Silva A.M."/>
            <person name="da Silva F.R."/>
            <person name="Silva W.A. Jr."/>
            <person name="da Silveira J.F."/>
            <person name="Silvestri M.L.Z."/>
            <person name="Siqueira W.J."/>
            <person name="de Souza A.A."/>
            <person name="de Souza A.P."/>
            <person name="Terenzi M.F."/>
            <person name="Truffi D."/>
            <person name="Tsai S.M."/>
            <person name="Tsuhako M.H."/>
            <person name="Vallada H."/>
            <person name="Van Sluys M.A."/>
            <person name="Verjovski-Almeida S."/>
            <person name="Vettore A.L."/>
            <person name="Zago M.A."/>
            <person name="Zatz M."/>
            <person name="Meidanis J."/>
            <person name="Setubal J.C."/>
        </authorList>
    </citation>
    <scope>NUCLEOTIDE SEQUENCE [LARGE SCALE GENOMIC DNA]</scope>
    <source>
        <strain>9a5c</strain>
    </source>
</reference>
<keyword id="KW-0067">ATP-binding</keyword>
<keyword id="KW-0963">Cytoplasm</keyword>
<keyword id="KW-0324">Glycolysis</keyword>
<keyword id="KW-0418">Kinase</keyword>
<keyword id="KW-0547">Nucleotide-binding</keyword>
<keyword id="KW-0808">Transferase</keyword>
<proteinExistence type="inferred from homology"/>
<sequence length="337" mass="36101">MNAPQAPVLVADIGGTNARFALANPTLTSAPLLNDSLREFAVIEFPSLSEAAQHYLHHIGIHTTKGVFAIAGHVDGDEARITNHPWVITRTRTATMLGFDTLHLINDFVAQAMAISVLGPQDVIQIGSAKWEQVPLSAATRNYGIIGPGTGLGVGGLVIRNGRCYPLETEGGHVSFPPSTPEEIRILEILSQQFGRVSNERLISGPGLVNIHRALSEIDGIDPGPLRPQDITMRAADGDIRATRTINLFCNIFGAITGDLVLIQGAWDGVFLTGGLVPKLLNSIQHSGFRQKFEHKGRFSAIMARIPSLAVIHPHPGLLGAAAYARDTEPVPQDIKA</sequence>
<protein>
    <recommendedName>
        <fullName evidence="1">Glucokinase</fullName>
        <ecNumber evidence="1">2.7.1.2</ecNumber>
    </recommendedName>
    <alternativeName>
        <fullName evidence="1">Glucose kinase</fullName>
    </alternativeName>
</protein>
<gene>
    <name evidence="1" type="primary">glk</name>
    <name type="ordered locus">XF_1064</name>
</gene>
<feature type="chain" id="PRO_0000215143" description="Glucokinase">
    <location>
        <begin position="1"/>
        <end position="337"/>
    </location>
</feature>
<feature type="binding site" evidence="1">
    <location>
        <begin position="11"/>
        <end position="16"/>
    </location>
    <ligand>
        <name>ATP</name>
        <dbReference type="ChEBI" id="CHEBI:30616"/>
    </ligand>
</feature>
<accession>Q9PEG4</accession>
<organism>
    <name type="scientific">Xylella fastidiosa (strain 9a5c)</name>
    <dbReference type="NCBI Taxonomy" id="160492"/>
    <lineage>
        <taxon>Bacteria</taxon>
        <taxon>Pseudomonadati</taxon>
        <taxon>Pseudomonadota</taxon>
        <taxon>Gammaproteobacteria</taxon>
        <taxon>Lysobacterales</taxon>
        <taxon>Lysobacteraceae</taxon>
        <taxon>Xylella</taxon>
    </lineage>
</organism>
<evidence type="ECO:0000255" key="1">
    <source>
        <dbReference type="HAMAP-Rule" id="MF_00524"/>
    </source>
</evidence>
<comment type="catalytic activity">
    <reaction evidence="1">
        <text>D-glucose + ATP = D-glucose 6-phosphate + ADP + H(+)</text>
        <dbReference type="Rhea" id="RHEA:17825"/>
        <dbReference type="ChEBI" id="CHEBI:4167"/>
        <dbReference type="ChEBI" id="CHEBI:15378"/>
        <dbReference type="ChEBI" id="CHEBI:30616"/>
        <dbReference type="ChEBI" id="CHEBI:61548"/>
        <dbReference type="ChEBI" id="CHEBI:456216"/>
        <dbReference type="EC" id="2.7.1.2"/>
    </reaction>
</comment>
<comment type="subcellular location">
    <subcellularLocation>
        <location evidence="1">Cytoplasm</location>
    </subcellularLocation>
</comment>
<comment type="similarity">
    <text evidence="1">Belongs to the bacterial glucokinase family.</text>
</comment>
<dbReference type="EC" id="2.7.1.2" evidence="1"/>
<dbReference type="EMBL" id="AE003849">
    <property type="protein sequence ID" value="AAF83874.1"/>
    <property type="molecule type" value="Genomic_DNA"/>
</dbReference>
<dbReference type="PIR" id="E82727">
    <property type="entry name" value="E82727"/>
</dbReference>
<dbReference type="RefSeq" id="WP_010893583.1">
    <property type="nucleotide sequence ID" value="NC_002488.3"/>
</dbReference>
<dbReference type="SMR" id="Q9PEG4"/>
<dbReference type="STRING" id="160492.XF_1064"/>
<dbReference type="KEGG" id="xfa:XF_1064"/>
<dbReference type="eggNOG" id="COG0837">
    <property type="taxonomic scope" value="Bacteria"/>
</dbReference>
<dbReference type="HOGENOM" id="CLU_042582_1_0_6"/>
<dbReference type="Proteomes" id="UP000000812">
    <property type="component" value="Chromosome"/>
</dbReference>
<dbReference type="GO" id="GO:0005829">
    <property type="term" value="C:cytosol"/>
    <property type="evidence" value="ECO:0007669"/>
    <property type="project" value="TreeGrafter"/>
</dbReference>
<dbReference type="GO" id="GO:0005524">
    <property type="term" value="F:ATP binding"/>
    <property type="evidence" value="ECO:0007669"/>
    <property type="project" value="UniProtKB-UniRule"/>
</dbReference>
<dbReference type="GO" id="GO:0005536">
    <property type="term" value="F:D-glucose binding"/>
    <property type="evidence" value="ECO:0007669"/>
    <property type="project" value="InterPro"/>
</dbReference>
<dbReference type="GO" id="GO:0004340">
    <property type="term" value="F:glucokinase activity"/>
    <property type="evidence" value="ECO:0007669"/>
    <property type="project" value="UniProtKB-UniRule"/>
</dbReference>
<dbReference type="GO" id="GO:0006096">
    <property type="term" value="P:glycolytic process"/>
    <property type="evidence" value="ECO:0007669"/>
    <property type="project" value="UniProtKB-UniRule"/>
</dbReference>
<dbReference type="CDD" id="cd24008">
    <property type="entry name" value="ASKHA_NBD_GLK"/>
    <property type="match status" value="1"/>
</dbReference>
<dbReference type="Gene3D" id="3.30.420.40">
    <property type="match status" value="1"/>
</dbReference>
<dbReference type="Gene3D" id="3.40.367.20">
    <property type="match status" value="1"/>
</dbReference>
<dbReference type="HAMAP" id="MF_00524">
    <property type="entry name" value="Glucokinase"/>
    <property type="match status" value="1"/>
</dbReference>
<dbReference type="InterPro" id="IPR043129">
    <property type="entry name" value="ATPase_NBD"/>
</dbReference>
<dbReference type="InterPro" id="IPR050201">
    <property type="entry name" value="Bacterial_glucokinase"/>
</dbReference>
<dbReference type="InterPro" id="IPR003836">
    <property type="entry name" value="Glucokinase"/>
</dbReference>
<dbReference type="NCBIfam" id="TIGR00749">
    <property type="entry name" value="glk"/>
    <property type="match status" value="1"/>
</dbReference>
<dbReference type="PANTHER" id="PTHR47690">
    <property type="entry name" value="GLUCOKINASE"/>
    <property type="match status" value="1"/>
</dbReference>
<dbReference type="PANTHER" id="PTHR47690:SF1">
    <property type="entry name" value="GLUCOKINASE"/>
    <property type="match status" value="1"/>
</dbReference>
<dbReference type="Pfam" id="PF02685">
    <property type="entry name" value="Glucokinase"/>
    <property type="match status" value="1"/>
</dbReference>
<dbReference type="SUPFAM" id="SSF53067">
    <property type="entry name" value="Actin-like ATPase domain"/>
    <property type="match status" value="1"/>
</dbReference>